<keyword id="KW-0066">ATP synthesis</keyword>
<keyword id="KW-0997">Cell inner membrane</keyword>
<keyword id="KW-1003">Cell membrane</keyword>
<keyword id="KW-0138">CF(0)</keyword>
<keyword id="KW-0375">Hydrogen ion transport</keyword>
<keyword id="KW-0406">Ion transport</keyword>
<keyword id="KW-0446">Lipid-binding</keyword>
<keyword id="KW-0472">Membrane</keyword>
<keyword id="KW-0812">Transmembrane</keyword>
<keyword id="KW-1133">Transmembrane helix</keyword>
<keyword id="KW-0813">Transport</keyword>
<dbReference type="EMBL" id="CP001072">
    <property type="protein sequence ID" value="ACD48657.1"/>
    <property type="molecule type" value="Genomic_DNA"/>
</dbReference>
<dbReference type="RefSeq" id="WP_000670763.1">
    <property type="nucleotide sequence ID" value="NC_010698.2"/>
</dbReference>
<dbReference type="SMR" id="B2UUX5"/>
<dbReference type="KEGG" id="hps:HPSH_06275"/>
<dbReference type="HOGENOM" id="CLU_148047_0_1_7"/>
<dbReference type="GO" id="GO:0005886">
    <property type="term" value="C:plasma membrane"/>
    <property type="evidence" value="ECO:0007669"/>
    <property type="project" value="UniProtKB-SubCell"/>
</dbReference>
<dbReference type="GO" id="GO:0045259">
    <property type="term" value="C:proton-transporting ATP synthase complex"/>
    <property type="evidence" value="ECO:0007669"/>
    <property type="project" value="UniProtKB-KW"/>
</dbReference>
<dbReference type="GO" id="GO:0033177">
    <property type="term" value="C:proton-transporting two-sector ATPase complex, proton-transporting domain"/>
    <property type="evidence" value="ECO:0007669"/>
    <property type="project" value="InterPro"/>
</dbReference>
<dbReference type="GO" id="GO:0008289">
    <property type="term" value="F:lipid binding"/>
    <property type="evidence" value="ECO:0007669"/>
    <property type="project" value="UniProtKB-KW"/>
</dbReference>
<dbReference type="GO" id="GO:0046933">
    <property type="term" value="F:proton-transporting ATP synthase activity, rotational mechanism"/>
    <property type="evidence" value="ECO:0007669"/>
    <property type="project" value="UniProtKB-UniRule"/>
</dbReference>
<dbReference type="CDD" id="cd18121">
    <property type="entry name" value="ATP-synt_Fo_c"/>
    <property type="match status" value="1"/>
</dbReference>
<dbReference type="Gene3D" id="1.20.20.10">
    <property type="entry name" value="F1F0 ATP synthase subunit C"/>
    <property type="match status" value="1"/>
</dbReference>
<dbReference type="HAMAP" id="MF_01396">
    <property type="entry name" value="ATP_synth_c_bact"/>
    <property type="match status" value="1"/>
</dbReference>
<dbReference type="InterPro" id="IPR000454">
    <property type="entry name" value="ATP_synth_F0_csu"/>
</dbReference>
<dbReference type="InterPro" id="IPR020537">
    <property type="entry name" value="ATP_synth_F0_csu_DDCD_BS"/>
</dbReference>
<dbReference type="InterPro" id="IPR038662">
    <property type="entry name" value="ATP_synth_F0_csu_sf"/>
</dbReference>
<dbReference type="InterPro" id="IPR002379">
    <property type="entry name" value="ATPase_proteolipid_c-like_dom"/>
</dbReference>
<dbReference type="InterPro" id="IPR035921">
    <property type="entry name" value="F/V-ATP_Csub_sf"/>
</dbReference>
<dbReference type="NCBIfam" id="NF006295">
    <property type="entry name" value="PRK08482.1"/>
    <property type="match status" value="1"/>
</dbReference>
<dbReference type="Pfam" id="PF00137">
    <property type="entry name" value="ATP-synt_C"/>
    <property type="match status" value="1"/>
</dbReference>
<dbReference type="PRINTS" id="PR00124">
    <property type="entry name" value="ATPASEC"/>
</dbReference>
<dbReference type="SUPFAM" id="SSF81333">
    <property type="entry name" value="F1F0 ATP synthase subunit C"/>
    <property type="match status" value="1"/>
</dbReference>
<dbReference type="PROSITE" id="PS00605">
    <property type="entry name" value="ATPASE_C"/>
    <property type="match status" value="1"/>
</dbReference>
<accession>B2UUX5</accession>
<gene>
    <name evidence="1" type="primary">atpE</name>
    <name type="ordered locus">HPSH_06275</name>
</gene>
<name>ATPL_HELPS</name>
<comment type="function">
    <text evidence="1">F(1)F(0) ATP synthase produces ATP from ADP in the presence of a proton or sodium gradient. F-type ATPases consist of two structural domains, F(1) containing the extramembraneous catalytic core and F(0) containing the membrane proton channel, linked together by a central stalk and a peripheral stalk. During catalysis, ATP synthesis in the catalytic domain of F(1) is coupled via a rotary mechanism of the central stalk subunits to proton translocation.</text>
</comment>
<comment type="function">
    <text evidence="1">Key component of the F(0) channel; it plays a direct role in translocation across the membrane. A homomeric c-ring of between 10-14 subunits forms the central stalk rotor element with the F(1) delta and epsilon subunits.</text>
</comment>
<comment type="subunit">
    <text evidence="1">F-type ATPases have 2 components, F(1) - the catalytic core - and F(0) - the membrane proton channel. F(1) has five subunits: alpha(3), beta(3), gamma(1), delta(1), epsilon(1). F(0) has three main subunits: a(1), b(2) and c(10-14). The alpha and beta chains form an alternating ring which encloses part of the gamma chain. F(1) is attached to F(0) by a central stalk formed by the gamma and epsilon chains, while a peripheral stalk is formed by the delta and b chains.</text>
</comment>
<comment type="subcellular location">
    <subcellularLocation>
        <location evidence="1">Cell inner membrane</location>
        <topology evidence="1">Multi-pass membrane protein</topology>
    </subcellularLocation>
</comment>
<comment type="similarity">
    <text evidence="1">Belongs to the ATPase C chain family.</text>
</comment>
<feature type="chain" id="PRO_1000184396" description="ATP synthase subunit c">
    <location>
        <begin position="1"/>
        <end position="105"/>
    </location>
</feature>
<feature type="transmembrane region" description="Helical" evidence="1">
    <location>
        <begin position="3"/>
        <end position="23"/>
    </location>
</feature>
<feature type="transmembrane region" description="Helical" evidence="1">
    <location>
        <begin position="32"/>
        <end position="52"/>
    </location>
</feature>
<feature type="transmembrane region" description="Helical" evidence="1">
    <location>
        <begin position="78"/>
        <end position="98"/>
    </location>
</feature>
<feature type="site" description="Reversibly protonated during proton transport" evidence="1">
    <location>
        <position position="84"/>
    </location>
</feature>
<organism>
    <name type="scientific">Helicobacter pylori (strain Shi470)</name>
    <dbReference type="NCBI Taxonomy" id="512562"/>
    <lineage>
        <taxon>Bacteria</taxon>
        <taxon>Pseudomonadati</taxon>
        <taxon>Campylobacterota</taxon>
        <taxon>Epsilonproteobacteria</taxon>
        <taxon>Campylobacterales</taxon>
        <taxon>Helicobacteraceae</taxon>
        <taxon>Helicobacter</taxon>
    </lineage>
</organism>
<proteinExistence type="inferred from homology"/>
<evidence type="ECO:0000255" key="1">
    <source>
        <dbReference type="HAMAP-Rule" id="MF_01396"/>
    </source>
</evidence>
<protein>
    <recommendedName>
        <fullName evidence="1">ATP synthase subunit c</fullName>
    </recommendedName>
    <alternativeName>
        <fullName evidence="1">ATP synthase F(0) sector subunit c</fullName>
    </alternativeName>
    <alternativeName>
        <fullName evidence="1">F-type ATPase subunit c</fullName>
        <shortName evidence="1">F-ATPase subunit c</shortName>
    </alternativeName>
    <alternativeName>
        <fullName evidence="1">Lipid-binding protein</fullName>
    </alternativeName>
</protein>
<reference key="1">
    <citation type="submission" date="2008-05" db="EMBL/GenBank/DDBJ databases">
        <title>Genome sequence of Helicobacter pylori from the remote Amazon: traces of Asian ancestry of the first Americans.</title>
        <authorList>
            <person name="Kersulyte D."/>
            <person name="Kalia A."/>
            <person name="Gilman R.H."/>
            <person name="Berg D.E."/>
        </authorList>
    </citation>
    <scope>NUCLEOTIDE SEQUENCE [LARGE SCALE GENOMIC DNA]</scope>
    <source>
        <strain>Shi470</strain>
    </source>
</reference>
<sequence>MKFLSLFFLALAGVAFAHDGGMGGMDMIKSYSILGAMIGLGIAAFGGAIGMGNAAAATITGTARNPGVGGKLLTTMFVAMAMIEAQVIYTLVFAIIAIYSNPFLS</sequence>